<evidence type="ECO:0000255" key="1">
    <source>
        <dbReference type="HAMAP-Rule" id="MF_00230"/>
    </source>
</evidence>
<sequence>MSVTGLPFDDFRVLLRDLPGPDSQALVAARDRDRQLTKPPGSLGRLEEIAMWLAAWSGRAPAVNRPLVAIFAGNHGVARHGITPFPSSVTQQMVENFAAGGAAINQICVAHDLGLKIFDLALDYPTGDITVEPALSERDCAATMAFGMEAIAGGTDLLCLGEMGIGNTTIAAAINLALYGGSAEDWVGPGTGSQGEMLERKIAVVKQAVEFHRDHLSDPLEVMRRLGGREIAAMAGAILAARMERIPVLIDGYVATAAAALLKAANPSALDHCLIGHVSAEPGHLKAIDKLGKTPLLALGMRLGEGTGAALAAGIVKAAAASHTGMATFEQAGVTNAGTH</sequence>
<keyword id="KW-0169">Cobalamin biosynthesis</keyword>
<keyword id="KW-0328">Glycosyltransferase</keyword>
<keyword id="KW-1185">Reference proteome</keyword>
<keyword id="KW-0808">Transferase</keyword>
<reference key="1">
    <citation type="journal article" date="2009" name="J. Bacteriol.">
        <title>Genome sequences of three Agrobacterium biovars help elucidate the evolution of multichromosome genomes in bacteria.</title>
        <authorList>
            <person name="Slater S.C."/>
            <person name="Goldman B.S."/>
            <person name="Goodner B."/>
            <person name="Setubal J.C."/>
            <person name="Farrand S.K."/>
            <person name="Nester E.W."/>
            <person name="Burr T.J."/>
            <person name="Banta L."/>
            <person name="Dickerman A.W."/>
            <person name="Paulsen I."/>
            <person name="Otten L."/>
            <person name="Suen G."/>
            <person name="Welch R."/>
            <person name="Almeida N.F."/>
            <person name="Arnold F."/>
            <person name="Burton O.T."/>
            <person name="Du Z."/>
            <person name="Ewing A."/>
            <person name="Godsy E."/>
            <person name="Heisel S."/>
            <person name="Houmiel K.L."/>
            <person name="Jhaveri J."/>
            <person name="Lu J."/>
            <person name="Miller N.M."/>
            <person name="Norton S."/>
            <person name="Chen Q."/>
            <person name="Phoolcharoen W."/>
            <person name="Ohlin V."/>
            <person name="Ondrusek D."/>
            <person name="Pride N."/>
            <person name="Stricklin S.L."/>
            <person name="Sun J."/>
            <person name="Wheeler C."/>
            <person name="Wilson L."/>
            <person name="Zhu H."/>
            <person name="Wood D.W."/>
        </authorList>
    </citation>
    <scope>NUCLEOTIDE SEQUENCE [LARGE SCALE GENOMIC DNA]</scope>
    <source>
        <strain>ATCC BAA-846 / DSM 112012 / S4</strain>
    </source>
</reference>
<proteinExistence type="inferred from homology"/>
<gene>
    <name evidence="1" type="primary">cobT</name>
    <name type="ordered locus">Avi_2018</name>
</gene>
<dbReference type="EC" id="2.4.2.21" evidence="1"/>
<dbReference type="EMBL" id="CP000633">
    <property type="protein sequence ID" value="ACM36437.1"/>
    <property type="molecule type" value="Genomic_DNA"/>
</dbReference>
<dbReference type="RefSeq" id="WP_015915858.1">
    <property type="nucleotide sequence ID" value="NC_011989.1"/>
</dbReference>
<dbReference type="SMR" id="B9JW09"/>
<dbReference type="STRING" id="311402.Avi_2018"/>
<dbReference type="KEGG" id="avi:Avi_2018"/>
<dbReference type="eggNOG" id="COG2038">
    <property type="taxonomic scope" value="Bacteria"/>
</dbReference>
<dbReference type="HOGENOM" id="CLU_002982_0_1_5"/>
<dbReference type="UniPathway" id="UPA00061">
    <property type="reaction ID" value="UER00516"/>
</dbReference>
<dbReference type="Proteomes" id="UP000001596">
    <property type="component" value="Chromosome 1"/>
</dbReference>
<dbReference type="GO" id="GO:0008939">
    <property type="term" value="F:nicotinate-nucleotide-dimethylbenzimidazole phosphoribosyltransferase activity"/>
    <property type="evidence" value="ECO:0007669"/>
    <property type="project" value="UniProtKB-UniRule"/>
</dbReference>
<dbReference type="GO" id="GO:0009236">
    <property type="term" value="P:cobalamin biosynthetic process"/>
    <property type="evidence" value="ECO:0007669"/>
    <property type="project" value="UniProtKB-KW"/>
</dbReference>
<dbReference type="CDD" id="cd02439">
    <property type="entry name" value="DMB-PRT_CobT"/>
    <property type="match status" value="1"/>
</dbReference>
<dbReference type="Gene3D" id="1.10.1610.10">
    <property type="match status" value="1"/>
</dbReference>
<dbReference type="Gene3D" id="3.40.50.10210">
    <property type="match status" value="1"/>
</dbReference>
<dbReference type="HAMAP" id="MF_00230">
    <property type="entry name" value="CobT"/>
    <property type="match status" value="1"/>
</dbReference>
<dbReference type="InterPro" id="IPR003200">
    <property type="entry name" value="Nict_dMeBzImd_PRibTrfase"/>
</dbReference>
<dbReference type="InterPro" id="IPR017846">
    <property type="entry name" value="Nict_dMeBzImd_PRibTrfase_bact"/>
</dbReference>
<dbReference type="InterPro" id="IPR023195">
    <property type="entry name" value="Nict_dMeBzImd_PRibTrfase_N"/>
</dbReference>
<dbReference type="InterPro" id="IPR036087">
    <property type="entry name" value="Nict_dMeBzImd_PRibTrfase_sf"/>
</dbReference>
<dbReference type="NCBIfam" id="TIGR03160">
    <property type="entry name" value="cobT_DBIPRT"/>
    <property type="match status" value="1"/>
</dbReference>
<dbReference type="NCBIfam" id="NF000996">
    <property type="entry name" value="PRK00105.1"/>
    <property type="match status" value="1"/>
</dbReference>
<dbReference type="PANTHER" id="PTHR43463">
    <property type="entry name" value="NICOTINATE-NUCLEOTIDE--DIMETHYLBENZIMIDAZOLE PHOSPHORIBOSYLTRANSFERASE"/>
    <property type="match status" value="1"/>
</dbReference>
<dbReference type="PANTHER" id="PTHR43463:SF1">
    <property type="entry name" value="NICOTINATE-NUCLEOTIDE--DIMETHYLBENZIMIDAZOLE PHOSPHORIBOSYLTRANSFERASE"/>
    <property type="match status" value="1"/>
</dbReference>
<dbReference type="Pfam" id="PF02277">
    <property type="entry name" value="DBI_PRT"/>
    <property type="match status" value="1"/>
</dbReference>
<dbReference type="SUPFAM" id="SSF52733">
    <property type="entry name" value="Nicotinate mononucleotide:5,6-dimethylbenzimidazole phosphoribosyltransferase (CobT)"/>
    <property type="match status" value="1"/>
</dbReference>
<protein>
    <recommendedName>
        <fullName evidence="1">Nicotinate-nucleotide--dimethylbenzimidazole phosphoribosyltransferase</fullName>
        <shortName evidence="1">NN:DBI PRT</shortName>
        <ecNumber evidence="1">2.4.2.21</ecNumber>
    </recommendedName>
    <alternativeName>
        <fullName evidence="1">N(1)-alpha-phosphoribosyltransferase</fullName>
    </alternativeName>
</protein>
<organism>
    <name type="scientific">Allorhizobium ampelinum (strain ATCC BAA-846 / DSM 112012 / S4)</name>
    <name type="common">Agrobacterium vitis (strain S4)</name>
    <dbReference type="NCBI Taxonomy" id="311402"/>
    <lineage>
        <taxon>Bacteria</taxon>
        <taxon>Pseudomonadati</taxon>
        <taxon>Pseudomonadota</taxon>
        <taxon>Alphaproteobacteria</taxon>
        <taxon>Hyphomicrobiales</taxon>
        <taxon>Rhizobiaceae</taxon>
        <taxon>Rhizobium/Agrobacterium group</taxon>
        <taxon>Allorhizobium</taxon>
        <taxon>Allorhizobium ampelinum</taxon>
    </lineage>
</organism>
<feature type="chain" id="PRO_1000125099" description="Nicotinate-nucleotide--dimethylbenzimidazole phosphoribosyltransferase">
    <location>
        <begin position="1"/>
        <end position="340"/>
    </location>
</feature>
<feature type="active site" description="Proton acceptor" evidence="1">
    <location>
        <position position="305"/>
    </location>
</feature>
<comment type="function">
    <text evidence="1">Catalyzes the synthesis of alpha-ribazole-5'-phosphate from nicotinate mononucleotide (NAMN) and 5,6-dimethylbenzimidazole (DMB).</text>
</comment>
<comment type="catalytic activity">
    <reaction evidence="1">
        <text>5,6-dimethylbenzimidazole + nicotinate beta-D-ribonucleotide = alpha-ribazole 5'-phosphate + nicotinate + H(+)</text>
        <dbReference type="Rhea" id="RHEA:11196"/>
        <dbReference type="ChEBI" id="CHEBI:15378"/>
        <dbReference type="ChEBI" id="CHEBI:15890"/>
        <dbReference type="ChEBI" id="CHEBI:32544"/>
        <dbReference type="ChEBI" id="CHEBI:57502"/>
        <dbReference type="ChEBI" id="CHEBI:57918"/>
        <dbReference type="EC" id="2.4.2.21"/>
    </reaction>
</comment>
<comment type="pathway">
    <text evidence="1">Nucleoside biosynthesis; alpha-ribazole biosynthesis; alpha-ribazole from 5,6-dimethylbenzimidazole: step 1/2.</text>
</comment>
<comment type="similarity">
    <text evidence="1">Belongs to the CobT family.</text>
</comment>
<name>COBT_ALLAM</name>
<accession>B9JW09</accession>